<accession>B2VK58</accession>
<comment type="function">
    <text evidence="1">Binds the lower part of the 30S subunit head. Binds mRNA in the 70S ribosome, positioning it for translation.</text>
</comment>
<comment type="subunit">
    <text evidence="1">Part of the 30S ribosomal subunit. Forms a tight complex with proteins S10 and S14.</text>
</comment>
<comment type="similarity">
    <text evidence="1">Belongs to the universal ribosomal protein uS3 family.</text>
</comment>
<sequence length="232" mass="25839">MGQKVHPNGIRLGIVKPWNSTWFANTKEFADNLDSDFKVRQFLTKELAKASVSRIVIERPAKSIRVTIHTARPGIVIGKKGEDVEKLRKVVADIAGVPAQINIAEVRKPELDAKLVADSITSQLERRVMFRRAMKRAVQNAMRLGAKGIKVEVSGRLGGAEIARTEWYREGRVPLHTLRADIDYNTSEAHTTYGVIGVKVWIFKGEILGGMAAVEQPEPAAQPKKQQRKGRK</sequence>
<evidence type="ECO:0000255" key="1">
    <source>
        <dbReference type="HAMAP-Rule" id="MF_01309"/>
    </source>
</evidence>
<evidence type="ECO:0000305" key="2"/>
<name>RS3_ERWT9</name>
<organism>
    <name type="scientific">Erwinia tasmaniensis (strain DSM 17950 / CFBP 7177 / CIP 109463 / NCPPB 4357 / Et1/99)</name>
    <dbReference type="NCBI Taxonomy" id="465817"/>
    <lineage>
        <taxon>Bacteria</taxon>
        <taxon>Pseudomonadati</taxon>
        <taxon>Pseudomonadota</taxon>
        <taxon>Gammaproteobacteria</taxon>
        <taxon>Enterobacterales</taxon>
        <taxon>Erwiniaceae</taxon>
        <taxon>Erwinia</taxon>
    </lineage>
</organism>
<gene>
    <name evidence="1" type="primary">rpsC</name>
    <name type="ordered locus">ETA_31570</name>
</gene>
<feature type="chain" id="PRO_1000140968" description="Small ribosomal subunit protein uS3">
    <location>
        <begin position="1"/>
        <end position="232"/>
    </location>
</feature>
<feature type="domain" description="KH type-2" evidence="1">
    <location>
        <begin position="39"/>
        <end position="107"/>
    </location>
</feature>
<reference key="1">
    <citation type="journal article" date="2008" name="Environ. Microbiol.">
        <title>The genome of Erwinia tasmaniensis strain Et1/99, a non-pathogenic bacterium in the genus Erwinia.</title>
        <authorList>
            <person name="Kube M."/>
            <person name="Migdoll A.M."/>
            <person name="Mueller I."/>
            <person name="Kuhl H."/>
            <person name="Beck A."/>
            <person name="Reinhardt R."/>
            <person name="Geider K."/>
        </authorList>
    </citation>
    <scope>NUCLEOTIDE SEQUENCE [LARGE SCALE GENOMIC DNA]</scope>
    <source>
        <strain>DSM 17950 / CFBP 7177 / CIP 109463 / NCPPB 4357 / Et1/99</strain>
    </source>
</reference>
<dbReference type="EMBL" id="CU468135">
    <property type="protein sequence ID" value="CAO98203.1"/>
    <property type="molecule type" value="Genomic_DNA"/>
</dbReference>
<dbReference type="RefSeq" id="WP_002919766.1">
    <property type="nucleotide sequence ID" value="NC_010694.1"/>
</dbReference>
<dbReference type="SMR" id="B2VK58"/>
<dbReference type="STRING" id="465817.ETA_31570"/>
<dbReference type="GeneID" id="97604570"/>
<dbReference type="KEGG" id="eta:ETA_31570"/>
<dbReference type="eggNOG" id="COG0092">
    <property type="taxonomic scope" value="Bacteria"/>
</dbReference>
<dbReference type="HOGENOM" id="CLU_058591_0_2_6"/>
<dbReference type="OrthoDB" id="9806396at2"/>
<dbReference type="Proteomes" id="UP000001726">
    <property type="component" value="Chromosome"/>
</dbReference>
<dbReference type="GO" id="GO:0022627">
    <property type="term" value="C:cytosolic small ribosomal subunit"/>
    <property type="evidence" value="ECO:0007669"/>
    <property type="project" value="TreeGrafter"/>
</dbReference>
<dbReference type="GO" id="GO:0003729">
    <property type="term" value="F:mRNA binding"/>
    <property type="evidence" value="ECO:0007669"/>
    <property type="project" value="UniProtKB-UniRule"/>
</dbReference>
<dbReference type="GO" id="GO:0019843">
    <property type="term" value="F:rRNA binding"/>
    <property type="evidence" value="ECO:0007669"/>
    <property type="project" value="UniProtKB-UniRule"/>
</dbReference>
<dbReference type="GO" id="GO:0003735">
    <property type="term" value="F:structural constituent of ribosome"/>
    <property type="evidence" value="ECO:0007669"/>
    <property type="project" value="InterPro"/>
</dbReference>
<dbReference type="GO" id="GO:0006412">
    <property type="term" value="P:translation"/>
    <property type="evidence" value="ECO:0007669"/>
    <property type="project" value="UniProtKB-UniRule"/>
</dbReference>
<dbReference type="CDD" id="cd02412">
    <property type="entry name" value="KH-II_30S_S3"/>
    <property type="match status" value="1"/>
</dbReference>
<dbReference type="FunFam" id="3.30.1140.32:FF:000001">
    <property type="entry name" value="30S ribosomal protein S3"/>
    <property type="match status" value="1"/>
</dbReference>
<dbReference type="FunFam" id="3.30.300.20:FF:000001">
    <property type="entry name" value="30S ribosomal protein S3"/>
    <property type="match status" value="1"/>
</dbReference>
<dbReference type="Gene3D" id="3.30.300.20">
    <property type="match status" value="1"/>
</dbReference>
<dbReference type="Gene3D" id="3.30.1140.32">
    <property type="entry name" value="Ribosomal protein S3, C-terminal domain"/>
    <property type="match status" value="1"/>
</dbReference>
<dbReference type="HAMAP" id="MF_01309_B">
    <property type="entry name" value="Ribosomal_uS3_B"/>
    <property type="match status" value="1"/>
</dbReference>
<dbReference type="InterPro" id="IPR004087">
    <property type="entry name" value="KH_dom"/>
</dbReference>
<dbReference type="InterPro" id="IPR015946">
    <property type="entry name" value="KH_dom-like_a/b"/>
</dbReference>
<dbReference type="InterPro" id="IPR004044">
    <property type="entry name" value="KH_dom_type_2"/>
</dbReference>
<dbReference type="InterPro" id="IPR009019">
    <property type="entry name" value="KH_sf_prok-type"/>
</dbReference>
<dbReference type="InterPro" id="IPR036419">
    <property type="entry name" value="Ribosomal_S3_C_sf"/>
</dbReference>
<dbReference type="InterPro" id="IPR005704">
    <property type="entry name" value="Ribosomal_uS3_bac-typ"/>
</dbReference>
<dbReference type="InterPro" id="IPR001351">
    <property type="entry name" value="Ribosomal_uS3_C"/>
</dbReference>
<dbReference type="InterPro" id="IPR018280">
    <property type="entry name" value="Ribosomal_uS3_CS"/>
</dbReference>
<dbReference type="NCBIfam" id="TIGR01009">
    <property type="entry name" value="rpsC_bact"/>
    <property type="match status" value="1"/>
</dbReference>
<dbReference type="PANTHER" id="PTHR11760">
    <property type="entry name" value="30S/40S RIBOSOMAL PROTEIN S3"/>
    <property type="match status" value="1"/>
</dbReference>
<dbReference type="PANTHER" id="PTHR11760:SF19">
    <property type="entry name" value="SMALL RIBOSOMAL SUBUNIT PROTEIN US3C"/>
    <property type="match status" value="1"/>
</dbReference>
<dbReference type="Pfam" id="PF07650">
    <property type="entry name" value="KH_2"/>
    <property type="match status" value="1"/>
</dbReference>
<dbReference type="Pfam" id="PF00189">
    <property type="entry name" value="Ribosomal_S3_C"/>
    <property type="match status" value="1"/>
</dbReference>
<dbReference type="SMART" id="SM00322">
    <property type="entry name" value="KH"/>
    <property type="match status" value="1"/>
</dbReference>
<dbReference type="SUPFAM" id="SSF54814">
    <property type="entry name" value="Prokaryotic type KH domain (KH-domain type II)"/>
    <property type="match status" value="1"/>
</dbReference>
<dbReference type="SUPFAM" id="SSF54821">
    <property type="entry name" value="Ribosomal protein S3 C-terminal domain"/>
    <property type="match status" value="1"/>
</dbReference>
<dbReference type="PROSITE" id="PS50823">
    <property type="entry name" value="KH_TYPE_2"/>
    <property type="match status" value="1"/>
</dbReference>
<dbReference type="PROSITE" id="PS00548">
    <property type="entry name" value="RIBOSOMAL_S3"/>
    <property type="match status" value="1"/>
</dbReference>
<keyword id="KW-1185">Reference proteome</keyword>
<keyword id="KW-0687">Ribonucleoprotein</keyword>
<keyword id="KW-0689">Ribosomal protein</keyword>
<keyword id="KW-0694">RNA-binding</keyword>
<keyword id="KW-0699">rRNA-binding</keyword>
<proteinExistence type="inferred from homology"/>
<protein>
    <recommendedName>
        <fullName evidence="1">Small ribosomal subunit protein uS3</fullName>
    </recommendedName>
    <alternativeName>
        <fullName evidence="2">30S ribosomal protein S3</fullName>
    </alternativeName>
</protein>